<evidence type="ECO:0000250" key="1">
    <source>
        <dbReference type="UniProtKB" id="P61809"/>
    </source>
</evidence>
<evidence type="ECO:0000256" key="2">
    <source>
        <dbReference type="SAM" id="MobiDB-lite"/>
    </source>
</evidence>
<evidence type="ECO:0000269" key="3">
    <source>
    </source>
</evidence>
<evidence type="ECO:0000269" key="4">
    <source>
    </source>
</evidence>
<evidence type="ECO:0000269" key="5">
    <source>
    </source>
</evidence>
<evidence type="ECO:0000269" key="6">
    <source>
    </source>
</evidence>
<evidence type="ECO:0000269" key="7">
    <source>
    </source>
</evidence>
<evidence type="ECO:0000269" key="8">
    <source>
    </source>
</evidence>
<evidence type="ECO:0000269" key="9">
    <source>
    </source>
</evidence>
<evidence type="ECO:0000269" key="10">
    <source>
    </source>
</evidence>
<evidence type="ECO:0000269" key="11">
    <source>
    </source>
</evidence>
<evidence type="ECO:0000269" key="12">
    <source>
    </source>
</evidence>
<evidence type="ECO:0000269" key="13">
    <source>
    </source>
</evidence>
<evidence type="ECO:0000269" key="14">
    <source>
    </source>
</evidence>
<evidence type="ECO:0000305" key="15"/>
<evidence type="ECO:0000305" key="16">
    <source>
    </source>
</evidence>
<evidence type="ECO:0007744" key="17">
    <source>
        <dbReference type="PDB" id="6LDP"/>
    </source>
</evidence>
<evidence type="ECO:0007744" key="18">
    <source>
        <dbReference type="PDB" id="7CNG"/>
    </source>
</evidence>
<evidence type="ECO:0007829" key="19">
    <source>
        <dbReference type="PDB" id="3O0G"/>
    </source>
</evidence>
<evidence type="ECO:0007829" key="20">
    <source>
        <dbReference type="PDB" id="6LDP"/>
    </source>
</evidence>
<evidence type="ECO:0007829" key="21">
    <source>
        <dbReference type="PDB" id="7VDQ"/>
    </source>
</evidence>
<gene>
    <name type="primary">CDK5R1</name>
    <name type="synonym">CDK5R</name>
    <name type="synonym">NCK5A</name>
</gene>
<organism>
    <name type="scientific">Homo sapiens</name>
    <name type="common">Human</name>
    <dbReference type="NCBI Taxonomy" id="9606"/>
    <lineage>
        <taxon>Eukaryota</taxon>
        <taxon>Metazoa</taxon>
        <taxon>Chordata</taxon>
        <taxon>Craniata</taxon>
        <taxon>Vertebrata</taxon>
        <taxon>Euteleostomi</taxon>
        <taxon>Mammalia</taxon>
        <taxon>Eutheria</taxon>
        <taxon>Euarchontoglires</taxon>
        <taxon>Primates</taxon>
        <taxon>Haplorrhini</taxon>
        <taxon>Catarrhini</taxon>
        <taxon>Hominidae</taxon>
        <taxon>Homo</taxon>
    </lineage>
</organism>
<accession>Q15078</accession>
<accession>E1P664</accession>
<accession>Q5U0G3</accession>
<keyword id="KW-0002">3D-structure</keyword>
<keyword id="KW-0090">Biological rhythms</keyword>
<keyword id="KW-1003">Cell membrane</keyword>
<keyword id="KW-0966">Cell projection</keyword>
<keyword id="KW-0963">Cytoplasm</keyword>
<keyword id="KW-0449">Lipoprotein</keyword>
<keyword id="KW-0472">Membrane</keyword>
<keyword id="KW-0519">Myristate</keyword>
<keyword id="KW-0539">Nucleus</keyword>
<keyword id="KW-0597">Phosphoprotein</keyword>
<keyword id="KW-1267">Proteomics identification</keyword>
<keyword id="KW-1185">Reference proteome</keyword>
<keyword id="KW-0832">Ubl conjugation</keyword>
<proteinExistence type="evidence at protein level"/>
<feature type="initiator methionine" description="Removed">
    <location>
        <position position="1"/>
    </location>
</feature>
<feature type="chain" id="PRO_0000004794" description="Cyclin-dependent kinase 5 activator 1, p35">
    <location>
        <begin position="2"/>
        <end position="307"/>
    </location>
</feature>
<feature type="chain" id="PRO_0000004795" description="Cyclin-dependent kinase 5 activator 1, p25">
    <location>
        <begin position="99"/>
        <end position="307"/>
    </location>
</feature>
<feature type="region of interest" description="Disordered" evidence="2">
    <location>
        <begin position="97"/>
        <end position="136"/>
    </location>
</feature>
<feature type="compositionally biased region" description="Pro residues" evidence="2">
    <location>
        <begin position="100"/>
        <end position="110"/>
    </location>
</feature>
<feature type="compositionally biased region" description="Low complexity" evidence="2">
    <location>
        <begin position="111"/>
        <end position="124"/>
    </location>
</feature>
<feature type="site" description="Cleavage; by calpain" evidence="1">
    <location>
        <begin position="98"/>
        <end position="99"/>
    </location>
</feature>
<feature type="modified residue" description="Phosphoserine; by CDK5" evidence="8">
    <location>
        <position position="8"/>
    </location>
</feature>
<feature type="modified residue" description="Phosphothreonine; by CDK5" evidence="8">
    <location>
        <position position="138"/>
    </location>
</feature>
<feature type="lipid moiety-binding region" description="N-myristoyl glycine" evidence="11">
    <location>
        <position position="2"/>
    </location>
</feature>
<feature type="mutagenesis site" description="Absent from the cell periphery." evidence="3 10">
    <original>G</original>
    <variation>A</variation>
    <location>
        <position position="2"/>
    </location>
</feature>
<feature type="mutagenesis site" description="Increased susceptibility to calpain." evidence="8">
    <original>S</original>
    <variation>A</variation>
    <location>
        <position position="8"/>
    </location>
</feature>
<feature type="mutagenesis site" description="Reduced susceptibility to calpain." evidence="8">
    <original>S</original>
    <variation>E</variation>
    <location>
        <position position="8"/>
    </location>
</feature>
<feature type="mutagenesis site" description="Increased susceptibility to calpain." evidence="8">
    <original>T</original>
    <variation>A</variation>
    <location>
        <position position="138"/>
    </location>
</feature>
<feature type="mutagenesis site" description="Reduced susceptibility to calpain." evidence="8">
    <original>T</original>
    <variation>E</variation>
    <location>
        <position position="138"/>
    </location>
</feature>
<feature type="mutagenesis site" description="In L-3A mutant; abolished recognition and ubiquitination by the CRL2(FEM1B) complex." evidence="14">
    <original>L</original>
    <variation>A</variation>
    <location>
        <position position="305"/>
    </location>
</feature>
<feature type="mutagenesis site" description="In L-3R mutant; abolished recognition and ubiquitination by the CRL2(FEM1B) complex, while promoting recognition and ubiquitination by the CRL2(FEM1B) complex." evidence="14">
    <original>L</original>
    <variation>R</variation>
    <location>
        <position position="305"/>
    </location>
</feature>
<feature type="helix" evidence="19">
    <location>
        <begin position="148"/>
        <end position="162"/>
    </location>
</feature>
<feature type="turn" evidence="21">
    <location>
        <begin position="163"/>
        <end position="165"/>
    </location>
</feature>
<feature type="helix" evidence="19">
    <location>
        <begin position="172"/>
        <end position="187"/>
    </location>
</feature>
<feature type="helix" evidence="19">
    <location>
        <begin position="198"/>
        <end position="211"/>
    </location>
</feature>
<feature type="helix" evidence="19">
    <location>
        <begin position="219"/>
        <end position="237"/>
    </location>
</feature>
<feature type="strand" evidence="19">
    <location>
        <begin position="239"/>
        <end position="241"/>
    </location>
</feature>
<feature type="helix" evidence="19">
    <location>
        <begin position="246"/>
        <end position="248"/>
    </location>
</feature>
<feature type="helix" evidence="19">
    <location>
        <begin position="254"/>
        <end position="277"/>
    </location>
</feature>
<feature type="helix" evidence="19">
    <location>
        <begin position="279"/>
        <end position="290"/>
    </location>
</feature>
<feature type="turn" evidence="20">
    <location>
        <begin position="301"/>
        <end position="304"/>
    </location>
</feature>
<dbReference type="EMBL" id="X80343">
    <property type="protein sequence ID" value="CAA56587.1"/>
    <property type="molecule type" value="mRNA"/>
</dbReference>
<dbReference type="EMBL" id="AY376350">
    <property type="protein sequence ID" value="AAQ74776.1"/>
    <property type="molecule type" value="Genomic_DNA"/>
</dbReference>
<dbReference type="EMBL" id="BT019573">
    <property type="protein sequence ID" value="AAV38380.1"/>
    <property type="molecule type" value="mRNA"/>
</dbReference>
<dbReference type="EMBL" id="CH471147">
    <property type="protein sequence ID" value="EAW80227.1"/>
    <property type="molecule type" value="Genomic_DNA"/>
</dbReference>
<dbReference type="EMBL" id="CH471147">
    <property type="protein sequence ID" value="EAW80228.1"/>
    <property type="molecule type" value="Genomic_DNA"/>
</dbReference>
<dbReference type="EMBL" id="BC020580">
    <property type="protein sequence ID" value="AAH20580.1"/>
    <property type="molecule type" value="mRNA"/>
</dbReference>
<dbReference type="CCDS" id="CCDS11273.1"/>
<dbReference type="PIR" id="S50861">
    <property type="entry name" value="S50861"/>
</dbReference>
<dbReference type="RefSeq" id="NP_003876.1">
    <property type="nucleotide sequence ID" value="NM_003885.3"/>
</dbReference>
<dbReference type="RefSeq" id="XP_011523740.1">
    <property type="nucleotide sequence ID" value="XM_011525438.2"/>
</dbReference>
<dbReference type="RefSeq" id="XP_016880770.1">
    <property type="nucleotide sequence ID" value="XM_017025281.1"/>
</dbReference>
<dbReference type="PDB" id="1H4L">
    <property type="method" value="X-ray"/>
    <property type="resolution" value="2.65 A"/>
    <property type="chains" value="D/E=147-293"/>
</dbReference>
<dbReference type="PDB" id="1UNG">
    <property type="method" value="X-ray"/>
    <property type="resolution" value="2.30 A"/>
    <property type="chains" value="D/E=100-307"/>
</dbReference>
<dbReference type="PDB" id="1UNH">
    <property type="method" value="X-ray"/>
    <property type="resolution" value="2.35 A"/>
    <property type="chains" value="D/E=100-307"/>
</dbReference>
<dbReference type="PDB" id="1UNL">
    <property type="method" value="X-ray"/>
    <property type="resolution" value="2.20 A"/>
    <property type="chains" value="D/E=100-307"/>
</dbReference>
<dbReference type="PDB" id="3O0G">
    <property type="method" value="X-ray"/>
    <property type="resolution" value="1.95 A"/>
    <property type="chains" value="D/E=145-293"/>
</dbReference>
<dbReference type="PDB" id="6LDP">
    <property type="method" value="X-ray"/>
    <property type="resolution" value="2.35 A"/>
    <property type="chains" value="A/B=298-307"/>
</dbReference>
<dbReference type="PDB" id="7CNG">
    <property type="method" value="X-ray"/>
    <property type="resolution" value="3.49 A"/>
    <property type="chains" value="A/B=298-307"/>
</dbReference>
<dbReference type="PDB" id="7VDP">
    <property type="method" value="X-ray"/>
    <property type="resolution" value="2.09 A"/>
    <property type="chains" value="C/D=100-307"/>
</dbReference>
<dbReference type="PDB" id="7VDQ">
    <property type="method" value="X-ray"/>
    <property type="resolution" value="2.91 A"/>
    <property type="chains" value="C/D=100-307"/>
</dbReference>
<dbReference type="PDB" id="7VDR">
    <property type="method" value="X-ray"/>
    <property type="resolution" value="2.55 A"/>
    <property type="chains" value="C/D=100-307"/>
</dbReference>
<dbReference type="PDB" id="7VDS">
    <property type="method" value="X-ray"/>
    <property type="resolution" value="3.05 A"/>
    <property type="chains" value="C/D=100-307"/>
</dbReference>
<dbReference type="PDBsum" id="1H4L"/>
<dbReference type="PDBsum" id="1UNG"/>
<dbReference type="PDBsum" id="1UNH"/>
<dbReference type="PDBsum" id="1UNL"/>
<dbReference type="PDBsum" id="3O0G"/>
<dbReference type="PDBsum" id="6LDP"/>
<dbReference type="PDBsum" id="7CNG"/>
<dbReference type="PDBsum" id="7VDP"/>
<dbReference type="PDBsum" id="7VDQ"/>
<dbReference type="PDBsum" id="7VDR"/>
<dbReference type="PDBsum" id="7VDS"/>
<dbReference type="SMR" id="Q15078"/>
<dbReference type="BioGRID" id="114376">
    <property type="interactions" value="58"/>
</dbReference>
<dbReference type="ComplexPortal" id="CPX-2201">
    <property type="entry name" value="Cyclin-dependent protein kinase 5 holoenzyme complex, p35 variant"/>
</dbReference>
<dbReference type="ComplexPortal" id="CPX-3142">
    <property type="entry name" value="Cyclin-dependent protein kinase 5 holoenzyme complex, p25 variant"/>
</dbReference>
<dbReference type="DIP" id="DIP-24222N"/>
<dbReference type="ELM" id="Q15078"/>
<dbReference type="FunCoup" id="Q15078">
    <property type="interactions" value="436"/>
</dbReference>
<dbReference type="IntAct" id="Q15078">
    <property type="interactions" value="44"/>
</dbReference>
<dbReference type="MINT" id="Q15078"/>
<dbReference type="STRING" id="9606.ENSP00000318486"/>
<dbReference type="BindingDB" id="Q15078"/>
<dbReference type="ChEMBL" id="CHEMBL2783"/>
<dbReference type="DrugBank" id="DB07364">
    <property type="generic name" value="6-PHENYL[5H]PYRROLO[2,3-B]PYRAZINE"/>
</dbReference>
<dbReference type="DrugBank" id="DB02052">
    <property type="generic name" value="Indirubin-3'-monoxime"/>
</dbReference>
<dbReference type="DrugCentral" id="Q15078"/>
<dbReference type="GlyGen" id="Q15078">
    <property type="glycosylation" value="1 site, 1 O-linked glycan (1 site)"/>
</dbReference>
<dbReference type="iPTMnet" id="Q15078"/>
<dbReference type="PhosphoSitePlus" id="Q15078"/>
<dbReference type="BioMuta" id="CDK5R1"/>
<dbReference type="DMDM" id="2498217"/>
<dbReference type="MassIVE" id="Q15078"/>
<dbReference type="PaxDb" id="9606-ENSP00000318486"/>
<dbReference type="PeptideAtlas" id="Q15078"/>
<dbReference type="ProteomicsDB" id="60429"/>
<dbReference type="ABCD" id="Q15078">
    <property type="antibodies" value="1 sequenced antibody"/>
</dbReference>
<dbReference type="Antibodypedia" id="15411">
    <property type="antibodies" value="279 antibodies from 34 providers"/>
</dbReference>
<dbReference type="DNASU" id="8851"/>
<dbReference type="Ensembl" id="ENST00000313401.4">
    <property type="protein sequence ID" value="ENSP00000318486.3"/>
    <property type="gene ID" value="ENSG00000176749.9"/>
</dbReference>
<dbReference type="GeneID" id="8851"/>
<dbReference type="KEGG" id="hsa:8851"/>
<dbReference type="MANE-Select" id="ENST00000313401.4">
    <property type="protein sequence ID" value="ENSP00000318486.3"/>
    <property type="RefSeq nucleotide sequence ID" value="NM_003885.3"/>
    <property type="RefSeq protein sequence ID" value="NP_003876.1"/>
</dbReference>
<dbReference type="UCSC" id="uc002hhn.4">
    <property type="organism name" value="human"/>
</dbReference>
<dbReference type="AGR" id="HGNC:1775"/>
<dbReference type="CTD" id="8851"/>
<dbReference type="DisGeNET" id="8851"/>
<dbReference type="GeneCards" id="CDK5R1"/>
<dbReference type="HGNC" id="HGNC:1775">
    <property type="gene designation" value="CDK5R1"/>
</dbReference>
<dbReference type="HPA" id="ENSG00000176749">
    <property type="expression patterns" value="Tissue enriched (brain)"/>
</dbReference>
<dbReference type="MalaCards" id="CDK5R1"/>
<dbReference type="MIM" id="603460">
    <property type="type" value="gene"/>
</dbReference>
<dbReference type="neXtProt" id="NX_Q15078"/>
<dbReference type="OpenTargets" id="ENSG00000176749"/>
<dbReference type="PharmGKB" id="PA26311"/>
<dbReference type="VEuPathDB" id="HostDB:ENSG00000176749"/>
<dbReference type="eggNOG" id="KOG3932">
    <property type="taxonomic scope" value="Eukaryota"/>
</dbReference>
<dbReference type="GeneTree" id="ENSGT00390000008812"/>
<dbReference type="HOGENOM" id="CLU_034132_2_0_1"/>
<dbReference type="InParanoid" id="Q15078"/>
<dbReference type="OMA" id="QHCNQNQ"/>
<dbReference type="OrthoDB" id="7676799at2759"/>
<dbReference type="PAN-GO" id="Q15078">
    <property type="GO annotations" value="6 GO annotations based on evolutionary models"/>
</dbReference>
<dbReference type="PhylomeDB" id="Q15078"/>
<dbReference type="TreeFam" id="TF101036"/>
<dbReference type="PathwayCommons" id="Q15078"/>
<dbReference type="Reactome" id="R-HSA-399956">
    <property type="pathway name" value="CRMPs in Sema3A signaling"/>
</dbReference>
<dbReference type="Reactome" id="R-HSA-6804756">
    <property type="pathway name" value="Regulation of TP53 Activity through Phosphorylation"/>
</dbReference>
<dbReference type="Reactome" id="R-HSA-8862803">
    <property type="pathway name" value="Deregulated CDK5 triggers multiple neurodegenerative pathways in Alzheimer's disease models"/>
</dbReference>
<dbReference type="Reactome" id="R-HSA-9031628">
    <property type="pathway name" value="NGF-stimulated transcription"/>
</dbReference>
<dbReference type="Reactome" id="R-HSA-9032845">
    <property type="pathway name" value="Activated NTRK2 signals through CDK5"/>
</dbReference>
<dbReference type="Reactome" id="R-HSA-9768919">
    <property type="pathway name" value="NPAS4 regulates expression of target genes"/>
</dbReference>
<dbReference type="SignaLink" id="Q15078"/>
<dbReference type="SIGNOR" id="Q15078"/>
<dbReference type="BioGRID-ORCS" id="8851">
    <property type="hits" value="8 hits in 1154 CRISPR screens"/>
</dbReference>
<dbReference type="EvolutionaryTrace" id="Q15078"/>
<dbReference type="GeneWiki" id="CDK5R1"/>
<dbReference type="GenomeRNAi" id="8851"/>
<dbReference type="Pharos" id="Q15078">
    <property type="development level" value="Tchem"/>
</dbReference>
<dbReference type="PRO" id="PR:Q15078"/>
<dbReference type="Proteomes" id="UP000005640">
    <property type="component" value="Chromosome 17"/>
</dbReference>
<dbReference type="RNAct" id="Q15078">
    <property type="molecule type" value="protein"/>
</dbReference>
<dbReference type="Bgee" id="ENSG00000176749">
    <property type="expression patterns" value="Expressed in cortical plate and 161 other cell types or tissues"/>
</dbReference>
<dbReference type="ExpressionAtlas" id="Q15078">
    <property type="expression patterns" value="baseline and differential"/>
</dbReference>
<dbReference type="GO" id="GO:0030424">
    <property type="term" value="C:axon"/>
    <property type="evidence" value="ECO:0000250"/>
    <property type="project" value="UniProtKB"/>
</dbReference>
<dbReference type="GO" id="GO:0043292">
    <property type="term" value="C:contractile muscle fiber"/>
    <property type="evidence" value="ECO:0000250"/>
    <property type="project" value="UniProtKB"/>
</dbReference>
<dbReference type="GO" id="GO:0000307">
    <property type="term" value="C:cyclin-dependent protein kinase holoenzyme complex"/>
    <property type="evidence" value="ECO:0000353"/>
    <property type="project" value="ComplexPortal"/>
</dbReference>
<dbReference type="GO" id="GO:0005737">
    <property type="term" value="C:cytoplasm"/>
    <property type="evidence" value="ECO:0000250"/>
    <property type="project" value="UniProtKB"/>
</dbReference>
<dbReference type="GO" id="GO:0005829">
    <property type="term" value="C:cytosol"/>
    <property type="evidence" value="ECO:0000304"/>
    <property type="project" value="Reactome"/>
</dbReference>
<dbReference type="GO" id="GO:0030425">
    <property type="term" value="C:dendrite"/>
    <property type="evidence" value="ECO:0000250"/>
    <property type="project" value="UniProtKB"/>
</dbReference>
<dbReference type="GO" id="GO:0043197">
    <property type="term" value="C:dendritic spine"/>
    <property type="evidence" value="ECO:0000250"/>
    <property type="project" value="UniProtKB"/>
</dbReference>
<dbReference type="GO" id="GO:0030426">
    <property type="term" value="C:growth cone"/>
    <property type="evidence" value="ECO:0000250"/>
    <property type="project" value="UniProtKB"/>
</dbReference>
<dbReference type="GO" id="GO:0043231">
    <property type="term" value="C:intracellular membrane-bounded organelle"/>
    <property type="evidence" value="ECO:0000314"/>
    <property type="project" value="HPA"/>
</dbReference>
<dbReference type="GO" id="GO:0016020">
    <property type="term" value="C:membrane"/>
    <property type="evidence" value="ECO:0000250"/>
    <property type="project" value="UniProtKB"/>
</dbReference>
<dbReference type="GO" id="GO:0031594">
    <property type="term" value="C:neuromuscular junction"/>
    <property type="evidence" value="ECO:0000250"/>
    <property type="project" value="UniProtKB"/>
</dbReference>
<dbReference type="GO" id="GO:0043005">
    <property type="term" value="C:neuron projection"/>
    <property type="evidence" value="ECO:0000250"/>
    <property type="project" value="ARUK-UCL"/>
</dbReference>
<dbReference type="GO" id="GO:0043025">
    <property type="term" value="C:neuronal cell body"/>
    <property type="evidence" value="ECO:0000250"/>
    <property type="project" value="UniProtKB"/>
</dbReference>
<dbReference type="GO" id="GO:0005654">
    <property type="term" value="C:nucleoplasm"/>
    <property type="evidence" value="ECO:0000314"/>
    <property type="project" value="HPA"/>
</dbReference>
<dbReference type="GO" id="GO:0005634">
    <property type="term" value="C:nucleus"/>
    <property type="evidence" value="ECO:0000250"/>
    <property type="project" value="UniProtKB"/>
</dbReference>
<dbReference type="GO" id="GO:0043204">
    <property type="term" value="C:perikaryon"/>
    <property type="evidence" value="ECO:0007669"/>
    <property type="project" value="UniProtKB-SubCell"/>
</dbReference>
<dbReference type="GO" id="GO:0048471">
    <property type="term" value="C:perinuclear region of cytoplasm"/>
    <property type="evidence" value="ECO:0000314"/>
    <property type="project" value="UniProtKB"/>
</dbReference>
<dbReference type="GO" id="GO:0005886">
    <property type="term" value="C:plasma membrane"/>
    <property type="evidence" value="ECO:0000304"/>
    <property type="project" value="Reactome"/>
</dbReference>
<dbReference type="GO" id="GO:0014069">
    <property type="term" value="C:postsynaptic density"/>
    <property type="evidence" value="ECO:0000250"/>
    <property type="project" value="UniProtKB"/>
</dbReference>
<dbReference type="GO" id="GO:0016533">
    <property type="term" value="C:protein kinase 5 complex"/>
    <property type="evidence" value="ECO:0000353"/>
    <property type="project" value="ComplexPortal"/>
</dbReference>
<dbReference type="GO" id="GO:0051015">
    <property type="term" value="F:actin filament binding"/>
    <property type="evidence" value="ECO:0007669"/>
    <property type="project" value="Ensembl"/>
</dbReference>
<dbReference type="GO" id="GO:0043014">
    <property type="term" value="F:alpha-tubulin binding"/>
    <property type="evidence" value="ECO:0000250"/>
    <property type="project" value="ARUK-UCL"/>
</dbReference>
<dbReference type="GO" id="GO:0048487">
    <property type="term" value="F:beta-tubulin binding"/>
    <property type="evidence" value="ECO:0000250"/>
    <property type="project" value="ARUK-UCL"/>
</dbReference>
<dbReference type="GO" id="GO:0045296">
    <property type="term" value="F:cadherin binding"/>
    <property type="evidence" value="ECO:0000250"/>
    <property type="project" value="UniProtKB"/>
</dbReference>
<dbReference type="GO" id="GO:0005509">
    <property type="term" value="F:calcium ion binding"/>
    <property type="evidence" value="ECO:0000250"/>
    <property type="project" value="UniProtKB"/>
</dbReference>
<dbReference type="GO" id="GO:0061575">
    <property type="term" value="F:cyclin-dependent protein serine/threonine kinase activator activity"/>
    <property type="evidence" value="ECO:0000316"/>
    <property type="project" value="ARUK-UCL"/>
</dbReference>
<dbReference type="GO" id="GO:0035255">
    <property type="term" value="F:ionotropic glutamate receptor binding"/>
    <property type="evidence" value="ECO:0007669"/>
    <property type="project" value="Ensembl"/>
</dbReference>
<dbReference type="GO" id="GO:0016301">
    <property type="term" value="F:kinase activity"/>
    <property type="evidence" value="ECO:0000250"/>
    <property type="project" value="UniProtKB"/>
</dbReference>
<dbReference type="GO" id="GO:0002020">
    <property type="term" value="F:protease binding"/>
    <property type="evidence" value="ECO:0007669"/>
    <property type="project" value="Ensembl"/>
</dbReference>
<dbReference type="GO" id="GO:0030295">
    <property type="term" value="F:protein kinase activator activity"/>
    <property type="evidence" value="ECO:0000304"/>
    <property type="project" value="GO_Central"/>
</dbReference>
<dbReference type="GO" id="GO:0004672">
    <property type="term" value="F:protein kinase activity"/>
    <property type="evidence" value="ECO:0000304"/>
    <property type="project" value="ProtInc"/>
</dbReference>
<dbReference type="GO" id="GO:0019901">
    <property type="term" value="F:protein kinase binding"/>
    <property type="evidence" value="ECO:0000353"/>
    <property type="project" value="UniProtKB"/>
</dbReference>
<dbReference type="GO" id="GO:0043539">
    <property type="term" value="F:protein serine/threonine kinase activator activity"/>
    <property type="evidence" value="ECO:0000314"/>
    <property type="project" value="UniProtKB"/>
</dbReference>
<dbReference type="GO" id="GO:0007411">
    <property type="term" value="P:axon guidance"/>
    <property type="evidence" value="ECO:0000250"/>
    <property type="project" value="UniProtKB"/>
</dbReference>
<dbReference type="GO" id="GO:0007413">
    <property type="term" value="P:axonal fasciculation"/>
    <property type="evidence" value="ECO:0000250"/>
    <property type="project" value="UniProtKB"/>
</dbReference>
<dbReference type="GO" id="GO:0007420">
    <property type="term" value="P:brain development"/>
    <property type="evidence" value="ECO:0000250"/>
    <property type="project" value="UniProtKB"/>
</dbReference>
<dbReference type="GO" id="GO:0021549">
    <property type="term" value="P:cerebellum development"/>
    <property type="evidence" value="ECO:0007669"/>
    <property type="project" value="Ensembl"/>
</dbReference>
<dbReference type="GO" id="GO:0048013">
    <property type="term" value="P:ephrin receptor signaling pathway"/>
    <property type="evidence" value="ECO:0000250"/>
    <property type="project" value="UniProtKB"/>
</dbReference>
<dbReference type="GO" id="GO:0007213">
    <property type="term" value="P:G protein-coupled acetylcholine receptor signaling pathway"/>
    <property type="evidence" value="ECO:0000250"/>
    <property type="project" value="UniProtKB"/>
</dbReference>
<dbReference type="GO" id="GO:0070315">
    <property type="term" value="P:G1 to G0 transition involved in cell differentiation"/>
    <property type="evidence" value="ECO:0007669"/>
    <property type="project" value="Ensembl"/>
</dbReference>
<dbReference type="GO" id="GO:0021766">
    <property type="term" value="P:hippocampus development"/>
    <property type="evidence" value="ECO:0007669"/>
    <property type="project" value="Ensembl"/>
</dbReference>
<dbReference type="GO" id="GO:0035235">
    <property type="term" value="P:ionotropic glutamate receptor signaling pathway"/>
    <property type="evidence" value="ECO:0000250"/>
    <property type="project" value="UniProtKB"/>
</dbReference>
<dbReference type="GO" id="GO:0021819">
    <property type="term" value="P:layer formation in cerebral cortex"/>
    <property type="evidence" value="ECO:0007669"/>
    <property type="project" value="Ensembl"/>
</dbReference>
<dbReference type="GO" id="GO:0000226">
    <property type="term" value="P:microtubule cytoskeleton organization"/>
    <property type="evidence" value="ECO:0000304"/>
    <property type="project" value="ARUK-UCL"/>
</dbReference>
<dbReference type="GO" id="GO:0045892">
    <property type="term" value="P:negative regulation of DNA-templated transcription"/>
    <property type="evidence" value="ECO:0000315"/>
    <property type="project" value="DFLAT"/>
</dbReference>
<dbReference type="GO" id="GO:0007158">
    <property type="term" value="P:neuron cell-cell adhesion"/>
    <property type="evidence" value="ECO:0000250"/>
    <property type="project" value="UniProtKB"/>
</dbReference>
<dbReference type="GO" id="GO:0030182">
    <property type="term" value="P:neuron differentiation"/>
    <property type="evidence" value="ECO:0000250"/>
    <property type="project" value="UniProtKB"/>
</dbReference>
<dbReference type="GO" id="GO:0001764">
    <property type="term" value="P:neuron migration"/>
    <property type="evidence" value="ECO:0000250"/>
    <property type="project" value="UniProtKB"/>
</dbReference>
<dbReference type="GO" id="GO:0031175">
    <property type="term" value="P:neuron projection development"/>
    <property type="evidence" value="ECO:0000250"/>
    <property type="project" value="UniProtKB"/>
</dbReference>
<dbReference type="GO" id="GO:0018105">
    <property type="term" value="P:peptidyl-serine phosphorylation"/>
    <property type="evidence" value="ECO:0000314"/>
    <property type="project" value="UniProtKB"/>
</dbReference>
<dbReference type="GO" id="GO:0018107">
    <property type="term" value="P:peptidyl-threonine phosphorylation"/>
    <property type="evidence" value="ECO:0000314"/>
    <property type="project" value="UniProtKB"/>
</dbReference>
<dbReference type="GO" id="GO:0031116">
    <property type="term" value="P:positive regulation of microtubule polymerization"/>
    <property type="evidence" value="ECO:0000250"/>
    <property type="project" value="ARUK-UCL"/>
</dbReference>
<dbReference type="GO" id="GO:0043525">
    <property type="term" value="P:positive regulation of neuron apoptotic process"/>
    <property type="evidence" value="ECO:0000250"/>
    <property type="project" value="UniProtKB"/>
</dbReference>
<dbReference type="GO" id="GO:0090314">
    <property type="term" value="P:positive regulation of protein targeting to membrane"/>
    <property type="evidence" value="ECO:0007669"/>
    <property type="project" value="Ensembl"/>
</dbReference>
<dbReference type="GO" id="GO:0032956">
    <property type="term" value="P:regulation of actin cytoskeleton organization"/>
    <property type="evidence" value="ECO:0007669"/>
    <property type="project" value="Ensembl"/>
</dbReference>
<dbReference type="GO" id="GO:0000079">
    <property type="term" value="P:regulation of cyclin-dependent protein serine/threonine kinase activity"/>
    <property type="evidence" value="ECO:0000304"/>
    <property type="project" value="ProtInc"/>
</dbReference>
<dbReference type="GO" id="GO:0061001">
    <property type="term" value="P:regulation of dendritic spine morphogenesis"/>
    <property type="evidence" value="ECO:0000250"/>
    <property type="project" value="UniProtKB"/>
</dbReference>
<dbReference type="GO" id="GO:0016241">
    <property type="term" value="P:regulation of macroautophagy"/>
    <property type="evidence" value="ECO:0000303"/>
    <property type="project" value="ParkinsonsUK-UCL"/>
</dbReference>
<dbReference type="GO" id="GO:0045664">
    <property type="term" value="P:regulation of neuron differentiation"/>
    <property type="evidence" value="ECO:0000303"/>
    <property type="project" value="UniProtKB"/>
</dbReference>
<dbReference type="GO" id="GO:0048511">
    <property type="term" value="P:rhythmic process"/>
    <property type="evidence" value="ECO:0007669"/>
    <property type="project" value="UniProtKB-KW"/>
</dbReference>
<dbReference type="GO" id="GO:0021722">
    <property type="term" value="P:superior olivary nucleus maturation"/>
    <property type="evidence" value="ECO:0007669"/>
    <property type="project" value="Ensembl"/>
</dbReference>
<dbReference type="FunFam" id="1.10.472.10:FF:000025">
    <property type="entry name" value="Cyclin-dependent kinase 5 activator"/>
    <property type="match status" value="1"/>
</dbReference>
<dbReference type="Gene3D" id="1.10.472.10">
    <property type="entry name" value="Cyclin-like"/>
    <property type="match status" value="1"/>
</dbReference>
<dbReference type="InterPro" id="IPR004944">
    <property type="entry name" value="CDK5_activator"/>
</dbReference>
<dbReference type="InterPro" id="IPR036915">
    <property type="entry name" value="Cyclin-like_sf"/>
</dbReference>
<dbReference type="PANTHER" id="PTHR23401">
    <property type="entry name" value="CYCLIN DEPENDANT KINASE-5 ACTIVATOR"/>
    <property type="match status" value="1"/>
</dbReference>
<dbReference type="PANTHER" id="PTHR23401:SF2">
    <property type="entry name" value="CYCLIN-DEPENDENT KINASE 5 ACTIVATOR 1"/>
    <property type="match status" value="1"/>
</dbReference>
<dbReference type="Pfam" id="PF03261">
    <property type="entry name" value="CDK5_activator"/>
    <property type="match status" value="1"/>
</dbReference>
<dbReference type="PIRSF" id="PIRSF009324">
    <property type="entry name" value="Cdk5_activator"/>
    <property type="match status" value="1"/>
</dbReference>
<dbReference type="SUPFAM" id="SSF47954">
    <property type="entry name" value="Cyclin-like"/>
    <property type="match status" value="1"/>
</dbReference>
<reference key="1">
    <citation type="journal article" date="1994" name="Nature">
        <title>p35 is a neural-specific regulatory subunit of cyclin-dependent kinase 5.</title>
        <authorList>
            <person name="Tsai L.-H."/>
            <person name="Delalle I."/>
            <person name="Caviness V.S. Jr."/>
            <person name="Chae T."/>
            <person name="Harlow E."/>
        </authorList>
    </citation>
    <scope>NUCLEOTIDE SEQUENCE [MRNA]</scope>
    <source>
        <tissue>Brain</tissue>
    </source>
</reference>
<reference key="2">
    <citation type="submission" date="2003-08" db="EMBL/GenBank/DDBJ databases">
        <authorList>
            <consortium name="NIEHS SNPs program"/>
        </authorList>
    </citation>
    <scope>NUCLEOTIDE SEQUENCE [GENOMIC DNA]</scope>
</reference>
<reference key="3">
    <citation type="submission" date="2004-10" db="EMBL/GenBank/DDBJ databases">
        <title>Cloning of human full-length CDSs in BD Creator(TM) system donor vector.</title>
        <authorList>
            <person name="Kalnine N."/>
            <person name="Chen X."/>
            <person name="Rolfs A."/>
            <person name="Halleck A."/>
            <person name="Hines L."/>
            <person name="Eisenstein S."/>
            <person name="Koundinya M."/>
            <person name="Raphael J."/>
            <person name="Moreira D."/>
            <person name="Kelley T."/>
            <person name="LaBaer J."/>
            <person name="Lin Y."/>
            <person name="Phelan M."/>
            <person name="Farmer A."/>
        </authorList>
    </citation>
    <scope>NUCLEOTIDE SEQUENCE [LARGE SCALE MRNA]</scope>
</reference>
<reference key="4">
    <citation type="submission" date="2005-09" db="EMBL/GenBank/DDBJ databases">
        <authorList>
            <person name="Mural R.J."/>
            <person name="Istrail S."/>
            <person name="Sutton G.G."/>
            <person name="Florea L."/>
            <person name="Halpern A.L."/>
            <person name="Mobarry C.M."/>
            <person name="Lippert R."/>
            <person name="Walenz B."/>
            <person name="Shatkay H."/>
            <person name="Dew I."/>
            <person name="Miller J.R."/>
            <person name="Flanigan M.J."/>
            <person name="Edwards N.J."/>
            <person name="Bolanos R."/>
            <person name="Fasulo D."/>
            <person name="Halldorsson B.V."/>
            <person name="Hannenhalli S."/>
            <person name="Turner R."/>
            <person name="Yooseph S."/>
            <person name="Lu F."/>
            <person name="Nusskern D.R."/>
            <person name="Shue B.C."/>
            <person name="Zheng X.H."/>
            <person name="Zhong F."/>
            <person name="Delcher A.L."/>
            <person name="Huson D.H."/>
            <person name="Kravitz S.A."/>
            <person name="Mouchard L."/>
            <person name="Reinert K."/>
            <person name="Remington K.A."/>
            <person name="Clark A.G."/>
            <person name="Waterman M.S."/>
            <person name="Eichler E.E."/>
            <person name="Adams M.D."/>
            <person name="Hunkapiller M.W."/>
            <person name="Myers E.W."/>
            <person name="Venter J.C."/>
        </authorList>
    </citation>
    <scope>NUCLEOTIDE SEQUENCE [LARGE SCALE GENOMIC DNA]</scope>
</reference>
<reference key="5">
    <citation type="journal article" date="2004" name="Genome Res.">
        <title>The status, quality, and expansion of the NIH full-length cDNA project: the Mammalian Gene Collection (MGC).</title>
        <authorList>
            <consortium name="The MGC Project Team"/>
        </authorList>
    </citation>
    <scope>NUCLEOTIDE SEQUENCE [LARGE SCALE MRNA]</scope>
    <source>
        <tissue>Mammary gland</tissue>
    </source>
</reference>
<reference key="6">
    <citation type="journal article" date="1999" name="Nature">
        <title>Conversion of p35 to p25 deregulates Cdk5 activity and promotes neurodegeneration.</title>
        <authorList>
            <person name="Patrick G.N."/>
            <person name="Zukerberg L."/>
            <person name="Nikolic M."/>
            <person name="de la Monte S."/>
            <person name="Dikkes P."/>
            <person name="Tsai L.H."/>
        </authorList>
    </citation>
    <scope>MUTAGENESIS OF GLY-2</scope>
    <scope>SUBCELLULAR LOCATION</scope>
    <scope>INVOLVEMENT IN NEURODEGENERATIVE DISEASES</scope>
</reference>
<reference key="7">
    <citation type="journal article" date="2002" name="Brain Res. Mol. Brain Res.">
        <title>Influence of phosphorylation of p35, an activator of cyclin-dependent kinase 5 (cdk5), on the proteolysis of p35.</title>
        <authorList>
            <person name="Kerokoski P."/>
            <person name="Suuronen T."/>
            <person name="Salminen A."/>
            <person name="Soininen H."/>
            <person name="Pirttilae T."/>
        </authorList>
    </citation>
    <scope>PHOSPHORYLATION BY CDK5</scope>
    <scope>UBIQUITINATION</scope>
</reference>
<reference key="8">
    <citation type="journal article" date="2004" name="J. Neurosci.">
        <title>p35/cyclin-dependent kinase 5 phosphorylation of ras guanine nucleotide releasing factor 2 (RasGRF2) mediates Rac-dependent extracellular signal-regulated kinase 1/2 activity, altering RasGRF2 and microtubule-associated protein 1b distribution in neurons.</title>
        <authorList>
            <person name="Kesavapany S."/>
            <person name="Amin N."/>
            <person name="Zheng Y.-L."/>
            <person name="Nijhara R."/>
            <person name="Jaffe H."/>
            <person name="Sihag R."/>
            <person name="Gutkind J.S."/>
            <person name="Takahashi S."/>
            <person name="Kulkarni A."/>
            <person name="Grant P."/>
            <person name="Pant H.C."/>
        </authorList>
    </citation>
    <scope>INTERACTION WITH RASGRF2</scope>
</reference>
<reference key="9">
    <citation type="journal article" date="2007" name="J. Biol. Chem.">
        <title>Suppression of calpain-dependent cleavage of the CDK5 activator p35 to p25 by site-specific phosphorylation.</title>
        <authorList>
            <person name="Kamei H."/>
            <person name="Saito T."/>
            <person name="Ozawa M."/>
            <person name="Fujita Y."/>
            <person name="Asada A."/>
            <person name="Bibb J.A."/>
            <person name="Saido T.C."/>
            <person name="Sorimachi H."/>
            <person name="Hisanaga S."/>
        </authorList>
    </citation>
    <scope>PHOSPHORYLATION AT SER-8 AND THR-138</scope>
    <scope>MUTAGENESIS OF SER-8 AND THR-138</scope>
</reference>
<reference key="10">
    <citation type="journal article" date="2007" name="J. Neurosci. Res.">
        <title>Regulation of membrane association and kinase activity of Cdk5-p35 by phosphorylation of p35.</title>
        <authorList>
            <person name="Sato K."/>
            <person name="Zhu Y.-S."/>
            <person name="Saito T."/>
            <person name="Yotsumoto K."/>
            <person name="Asada A."/>
            <person name="Hasegawa M."/>
            <person name="Hisanaga S."/>
        </authorList>
    </citation>
    <scope>PHOSPHORYLATION BY CDK5</scope>
    <scope>INTERACTION WITH CDK5</scope>
    <scope>SUBCELLULAR LOCATION</scope>
</reference>
<reference key="11">
    <citation type="journal article" date="2008" name="J. Neurochem.">
        <title>Myristoylation of p39 and p35 is a determinant of cytoplasmic or nuclear localization of active cyclin-dependent kinase 5 complexes.</title>
        <authorList>
            <person name="Asada A."/>
            <person name="Yamamoto N."/>
            <person name="Gohda M."/>
            <person name="Saito T."/>
            <person name="Hayashi N."/>
            <person name="Hisanaga S."/>
        </authorList>
    </citation>
    <scope>SUBCELLULAR LOCATION</scope>
    <scope>MYRISTOYLATION</scope>
    <scope>MUTAGENESIS OF GLY-2</scope>
</reference>
<reference key="12">
    <citation type="journal article" date="2010" name="Proteomics">
        <title>Strategy for comprehensive identification of human N-myristoylated proteins using an insect cell-free protein synthesis system.</title>
        <authorList>
            <person name="Suzuki T."/>
            <person name="Moriya K."/>
            <person name="Nagatoshi K."/>
            <person name="Ota Y."/>
            <person name="Ezure T."/>
            <person name="Ando E."/>
            <person name="Tsunasawa S."/>
            <person name="Utsumi T."/>
        </authorList>
    </citation>
    <scope>MYRISTOYLATION AT GLY-2</scope>
</reference>
<reference key="13">
    <citation type="journal article" date="2013" name="J. Biol. Chem.">
        <title>Cyclin-dependent kinase 5 (Cdk5) regulates the function of CLOCK protein by direct phosphorylation.</title>
        <authorList>
            <person name="Kwak Y."/>
            <person name="Jeong J."/>
            <person name="Lee S."/>
            <person name="Park Y.U."/>
            <person name="Lee S.A."/>
            <person name="Han D.H."/>
            <person name="Kim J.H."/>
            <person name="Ohshima T."/>
            <person name="Mikoshiba K."/>
            <person name="Suh Y.H."/>
            <person name="Cho S."/>
            <person name="Park S.K."/>
        </authorList>
    </citation>
    <scope>FUNCTION</scope>
    <scope>INTERACTION WITH CLOCK</scope>
</reference>
<reference key="14">
    <citation type="journal article" date="2021" name="Nat. Chem. Biol.">
        <title>Molecular basis for ubiquitin ligase CRL2FEM1C-mediated recognition of C-degron.</title>
        <authorList>
            <person name="Yan X."/>
            <person name="Wang X."/>
            <person name="Li Y."/>
            <person name="Zhou M."/>
            <person name="Li Y."/>
            <person name="Song L."/>
            <person name="Mi W."/>
            <person name="Min J."/>
            <person name="Dong C."/>
        </authorList>
    </citation>
    <scope>UBIQUITINATION</scope>
    <scope>MUTAGENESIS OF LEU-305</scope>
</reference>
<reference key="15">
    <citation type="journal article" date="2005" name="Chem. Biol.">
        <title>Defining Cdk5 ligand chemical space with small molecule inhibitors of tau phosphorylation.</title>
        <authorList>
            <person name="Ahn J.S."/>
            <person name="Radhakrishnan M.L."/>
            <person name="Mapelli M."/>
            <person name="Choi S."/>
            <person name="Tidor B."/>
            <person name="Cuny G.D."/>
            <person name="Musacchio A."/>
            <person name="Yeh L.A."/>
            <person name="Kosik K.S."/>
        </authorList>
    </citation>
    <scope>X-RAY CRYSTALLOGRAPHY (1.95 ANGSTROMS) OF 145-293 IN COMPLEX WITH CDK5</scope>
</reference>
<reference key="16">
    <citation type="journal article" date="2005" name="J. Med. Chem.">
        <title>Mechanism of CDK5/p25 binding by CDK inhibitors.</title>
        <authorList>
            <person name="Mapelli M."/>
            <person name="Massimiliano L."/>
            <person name="Crovace C."/>
            <person name="Seeliger M.A."/>
            <person name="Tsai L.H."/>
            <person name="Meijer L."/>
            <person name="Musacchio A."/>
        </authorList>
    </citation>
    <scope>X-RAY CRYSTALLOGRAPHY (2.2 ANGSTROMS) OF 100-307 IN COMPLEX WITH CDK5 AND INHIBITORS</scope>
</reference>
<reference evidence="17 18" key="17">
    <citation type="journal article" date="2021" name="Nat. Chem. Biol.">
        <title>Molecular basis for arginine C-terminal degron recognition by Cul2FEM1 E3 ligase.</title>
        <authorList>
            <person name="Chen X."/>
            <person name="Liao S."/>
            <person name="Makaros Y."/>
            <person name="Guo Q."/>
            <person name="Zhu Z."/>
            <person name="Krizelman R."/>
            <person name="Dahan K."/>
            <person name="Tu X."/>
            <person name="Yao X."/>
            <person name="Koren I."/>
            <person name="Xu C."/>
        </authorList>
    </citation>
    <scope>X-RAY CRYSTALLOGRAPHY (2.35 ANGSTROMS) OF 298-307 IN COMPLEX WITH FEM1B</scope>
    <scope>UBIQUITINATION</scope>
</reference>
<comment type="function">
    <text evidence="12">p35 is a neuron specific activator of CDK5. The complex p35/CDK5 is required for neurite outgrowth and cortical lamination. Involved in dendritic spine morphogenesis by mediating the EFNA1-EPHA4 signaling. Activator of TPKII. The complex p35/CDK5 participates in the regulation of the circadian clock by modulating the function of CLOCK protein: phosphorylates CLOCK at 'Thr-451' and 'Thr-461' and regulates the transcriptional activity of the CLOCK-BMAL1 heterodimer in association with altered stability and subcellular distribution.</text>
</comment>
<comment type="subunit">
    <text evidence="1 5 6 7 9 12">Heterodimer composed of a catalytic subunit CDK5 and a regulatory subunit CDK5R1 (p25) and macromolecular complex composed of at least CDK5, CDK5R1 (p35) and CDK5RAP1 or CDK5RAP2 or CDK5RAP3 (PubMed:15689152, PubMed:16039528, PubMed:17671990). Only the heterodimer shows kinase activity (PubMed:15689152, PubMed:16039528, PubMed:17671990). Interacts with EPHA4 and NGEF; may mediate the activation of NGEF by EPHA4 (By similarity). Interacts with RASGRF2 (PubMed:15128856). The complex p35/CDK5 interacts with CLOCK (PubMed:24235147).</text>
</comment>
<comment type="interaction">
    <interactant intactId="EBI-746189">
        <id>Q15078</id>
    </interactant>
    <interactant intactId="EBI-2008436">
        <id>Q6ZMQ8-1</id>
        <label>AATK</label>
    </interactant>
    <organismsDiffer>false</organismsDiffer>
    <experiments>2</experiments>
</comment>
<comment type="interaction">
    <interactant intactId="EBI-746189">
        <id>Q15078</id>
    </interactant>
    <interactant intactId="EBI-2008441">
        <id>Q6ZMQ8-2</id>
        <label>AATK</label>
    </interactant>
    <organismsDiffer>false</organismsDiffer>
    <experiments>6</experiments>
</comment>
<comment type="interaction">
    <interactant intactId="EBI-746189">
        <id>Q15078</id>
    </interactant>
    <interactant intactId="EBI-10176008">
        <id>O94983-5</id>
        <label>CAMTA2</label>
    </interactant>
    <organismsDiffer>false</organismsDiffer>
    <experiments>3</experiments>
</comment>
<comment type="interaction">
    <interactant intactId="EBI-746189">
        <id>Q15078</id>
    </interactant>
    <interactant intactId="EBI-1041567">
        <id>Q00535</id>
        <label>CDK5</label>
    </interactant>
    <organismsDiffer>false</organismsDiffer>
    <experiments>15</experiments>
</comment>
<comment type="interaction">
    <interactant intactId="EBI-746189">
        <id>Q15078</id>
    </interactant>
    <interactant intactId="EBI-21670927">
        <id>Q6UXH1-2</id>
        <label>CRELD2</label>
    </interactant>
    <organismsDiffer>false</organismsDiffer>
    <experiments>3</experiments>
</comment>
<comment type="interaction">
    <interactant intactId="EBI-746189">
        <id>Q15078</id>
    </interactant>
    <interactant intactId="EBI-20894690">
        <id>P49184</id>
        <label>DNASE1L1</label>
    </interactant>
    <organismsDiffer>false</organismsDiffer>
    <experiments>3</experiments>
</comment>
<comment type="interaction">
    <interactant intactId="EBI-746189">
        <id>Q15078</id>
    </interactant>
    <interactant intactId="EBI-1171184">
        <id>P16422</id>
        <label>EPCAM</label>
    </interactant>
    <organismsDiffer>false</organismsDiffer>
    <experiments>3</experiments>
</comment>
<comment type="interaction">
    <interactant intactId="EBI-746189">
        <id>Q15078</id>
    </interactant>
    <interactant intactId="EBI-9018187">
        <id>P26715</id>
        <label>KLRC1</label>
    </interactant>
    <organismsDiffer>false</organismsDiffer>
    <experiments>3</experiments>
</comment>
<comment type="interaction">
    <interactant intactId="EBI-746189">
        <id>Q15078</id>
    </interactant>
    <interactant intactId="EBI-5650739">
        <id>P43356</id>
        <label>MAGEA2B</label>
    </interactant>
    <organismsDiffer>false</organismsDiffer>
    <experiments>3</experiments>
</comment>
<comment type="interaction">
    <interactant intactId="EBI-746189">
        <id>Q15078</id>
    </interactant>
    <interactant intactId="EBI-744790">
        <id>Q8NCR3</id>
        <label>MFI</label>
    </interactant>
    <organismsDiffer>false</organismsDiffer>
    <experiments>3</experiments>
</comment>
<comment type="interaction">
    <interactant intactId="EBI-746189">
        <id>Q15078</id>
    </interactant>
    <interactant intactId="EBI-742948">
        <id>Q5JR59</id>
        <label>MTUS2</label>
    </interactant>
    <organismsDiffer>false</organismsDiffer>
    <experiments>3</experiments>
</comment>
<comment type="interaction">
    <interactant intactId="EBI-746189">
        <id>Q15078</id>
    </interactant>
    <interactant intactId="EBI-9088235">
        <id>A2RUH7</id>
        <label>MYBPHL</label>
    </interactant>
    <organismsDiffer>false</organismsDiffer>
    <experiments>3</experiments>
</comment>
<comment type="interaction">
    <interactant intactId="EBI-746189">
        <id>Q15078</id>
    </interactant>
    <interactant intactId="EBI-3446748">
        <id>Q9NPC7</id>
        <label>MYNN</label>
    </interactant>
    <organismsDiffer>false</organismsDiffer>
    <experiments>3</experiments>
</comment>
<comment type="interaction">
    <interactant intactId="EBI-746189">
        <id>Q15078</id>
    </interactant>
    <interactant intactId="EBI-11750983">
        <id>Q9HC98-4</id>
        <label>NEK6</label>
    </interactant>
    <organismsDiffer>false</organismsDiffer>
    <experiments>3</experiments>
</comment>
<comment type="interaction">
    <interactant intactId="EBI-746189">
        <id>Q15078</id>
    </interactant>
    <interactant intactId="EBI-473160">
        <id>Q8N2W9</id>
        <label>PIAS4</label>
    </interactant>
    <organismsDiffer>false</organismsDiffer>
    <experiments>3</experiments>
</comment>
<comment type="interaction">
    <interactant intactId="EBI-746189">
        <id>Q15078</id>
    </interactant>
    <interactant intactId="EBI-2860740">
        <id>Q96QH2</id>
        <label>PRAM1</label>
    </interactant>
    <organismsDiffer>false</organismsDiffer>
    <experiments>3</experiments>
</comment>
<comment type="interaction">
    <interactant intactId="EBI-746189">
        <id>Q15078</id>
    </interactant>
    <interactant intactId="EBI-4287022">
        <id>Q96E17</id>
        <label>RAB3C</label>
    </interactant>
    <organismsDiffer>false</organismsDiffer>
    <experiments>3</experiments>
</comment>
<comment type="interaction">
    <interactant intactId="EBI-746189">
        <id>Q15078</id>
    </interactant>
    <interactant intactId="EBI-359174">
        <id>Q02978</id>
        <label>SLC25A11</label>
    </interactant>
    <organismsDiffer>false</organismsDiffer>
    <experiments>3</experiments>
</comment>
<comment type="interaction">
    <interactant intactId="EBI-746189">
        <id>Q15078</id>
    </interactant>
    <interactant intactId="EBI-741350">
        <id>Q9BT49</id>
        <label>THAP7</label>
    </interactant>
    <organismsDiffer>false</organismsDiffer>
    <experiments>3</experiments>
</comment>
<comment type="interaction">
    <interactant intactId="EBI-746189">
        <id>Q15078</id>
    </interactant>
    <interactant intactId="EBI-1037322">
        <id>Q9ULW0</id>
        <label>TPX2</label>
    </interactant>
    <organismsDiffer>false</organismsDiffer>
    <experiments>3</experiments>
</comment>
<comment type="interaction">
    <interactant intactId="EBI-746189">
        <id>Q15078</id>
    </interactant>
    <interactant intactId="EBI-22013570">
        <id>Q9BQ29</id>
    </interactant>
    <organismsDiffer>false</organismsDiffer>
    <experiments>3</experiments>
</comment>
<comment type="subcellular location">
    <molecule>Cyclin-dependent kinase 5 activator 1, p35</molecule>
    <subcellularLocation>
        <location evidence="16">Cell membrane</location>
        <topology evidence="10">Lipid-anchor</topology>
        <orientation evidence="15">Cytoplasmic side</orientation>
    </subcellularLocation>
    <subcellularLocation>
        <location evidence="3">Cell projection</location>
        <location evidence="3">Neuron projection</location>
    </subcellularLocation>
    <text evidence="3">In the primary cortical neurons, p35 is present in the peripheries and nerve terminals.</text>
</comment>
<comment type="subcellular location">
    <molecule>Cyclin-dependent kinase 5 activator 1, p25</molecule>
    <subcellularLocation>
        <location evidence="10">Nucleus</location>
    </subcellularLocation>
    <subcellularLocation>
        <location evidence="3">Cytoplasm</location>
        <location evidence="3">Perinuclear region</location>
    </subcellularLocation>
    <subcellularLocation>
        <location evidence="3">Perikaryon</location>
    </subcellularLocation>
    <text evidence="10">The conversion of p35 to p25 relocalizes the protein from the cell periphery to the cytoplasm, in nuclear and perinuclear regions (PubMed:18507738). In the primary cortical neurons, p25 is primarily concentrated in the cell soma and is largely absent from neurites (PubMed:18507738).</text>
</comment>
<comment type="tissue specificity">
    <text>Brain and neuron specific.</text>
</comment>
<comment type="PTM">
    <text evidence="1">The p35 form is proteolytically cleaved by calpain, giving rise to the p25 form. P35 has a 5 to 10 fold shorter half-life compared to p25. The conversion results in deregulation of the CDK5 kinase: p25/CDK5 kinase displays an increased and altered tau phosphorylation in comparison to the p35/CDK5 kinase in vivo (By similarity).</text>
</comment>
<comment type="PTM">
    <text evidence="10 11">Myristoylated. A proper myristoylation signal is essential for the proper distribution of p35.</text>
</comment>
<comment type="PTM">
    <text evidence="4 13 14">Ubiquitinated, leading to its degradation: degradation of p35 by proteasome results in down-regulation of CDK5 activity (PubMed:12393264). During this process, CDK5 phosphorylates p35 and induces its ubiquitination and subsequent degradation (PubMed:12393264). Ubiquitinated by the CRL2(FEM1B) complex, which recognizes the -Gly-Leu-Asp-Arg C-degron at the C-terminus, leading to its degradation (PubMed:33398168, PubMed:33398170).</text>
</comment>
<comment type="PTM">
    <text evidence="8">Phosphorylation at Ser-8 and Thr-138 by CDK5 prevents calpain-mediated proteolysis.</text>
</comment>
<comment type="miscellaneous">
    <text>Cleavage of p35 to p25 may be involved in the pathogenesis of cytoskeletal abnormalities and neuronal death in neurodegenerative diseases. The p25 form accumulates in neurons in the brain of patients with Alzheimer disease, but not in normal brain. This accumulation correlates with an increase in CDK5 kinase activity. Application of amyloid beta peptide A-beta(1-42) induced the conversion of p35 to p25 in primary cortical neurons. Expression of the p25/Cdk5 complex in cultured primary neurons induces cytoskeletal disruption, morphological degeneration and apoptosis.</text>
</comment>
<comment type="similarity">
    <text evidence="15">Belongs to the cyclin-dependent kinase 5 activator family.</text>
</comment>
<sequence>MGTVLSLSPSYRKATLFEDGAATVGHYTAVQNSKNAKDKNLKRHSIISVLPWKRIVAVSAKKKNSKKVQPNSSYQNNITHLNNENLKKSLSCANLSTFAQPPPAQPPAPPASQLSGSQTGGSSSVKKAPHPAVTSAGTPKRVIVQASTSELLRCLGEFLCRRCYRLKHLSPTDPVLWLRSVDRSLLLQGWQDQGFITPANVVFLYMLCRDVISSEVGSDHELQAVLLTCLYLSYSYMGNEISYPLKPFLVESCKEAFWDRCLSVINLMSSKMLQINADPHYFTQVFSDLKNESGQEDKKRLLLGLDR</sequence>
<name>CD5R1_HUMAN</name>
<protein>
    <recommendedName>
        <fullName>Cyclin-dependent kinase 5 activator 1</fullName>
        <shortName>CDK5 activator 1</shortName>
    </recommendedName>
    <alternativeName>
        <fullName>Cyclin-dependent kinase 5 regulatory subunit 1</fullName>
    </alternativeName>
    <alternativeName>
        <fullName>TPKII regulatory subunit</fullName>
    </alternativeName>
    <component>
        <recommendedName>
            <fullName>Cyclin-dependent kinase 5 activator 1, p35</fullName>
            <shortName>p35</shortName>
        </recommendedName>
    </component>
    <component>
        <recommendedName>
            <fullName>Cyclin-dependent kinase 5 activator 1, p25</fullName>
            <shortName>p25</shortName>
        </recommendedName>
        <alternativeName>
            <fullName>Tau protein kinase II 23 kDa subunit</fullName>
            <shortName>p23</shortName>
        </alternativeName>
    </component>
</protein>